<comment type="function">
    <text evidence="1">The heterodimer acts as both an ATP-dependent DNA helicase and an ATP-dependent, dual-direction single-stranded exonuclease. Recognizes the chi site generating a DNA molecule suitable for the initiation of homologous recombination. The AddB subunit has 5' -&gt; 3' nuclease activity but not helicase activity.</text>
</comment>
<comment type="cofactor">
    <cofactor evidence="1">
        <name>Mg(2+)</name>
        <dbReference type="ChEBI" id="CHEBI:18420"/>
    </cofactor>
</comment>
<comment type="cofactor">
    <cofactor evidence="1">
        <name>[4Fe-4S] cluster</name>
        <dbReference type="ChEBI" id="CHEBI:49883"/>
    </cofactor>
    <text evidence="1">Binds 1 [4Fe-4S] cluster.</text>
</comment>
<comment type="subunit">
    <text evidence="1">Heterodimer of AddA and AddB.</text>
</comment>
<comment type="miscellaneous">
    <text evidence="1">Despite having conserved helicase domains, this subunit does not have helicase activity.</text>
</comment>
<comment type="similarity">
    <text evidence="1">Belongs to the helicase family. AddB/RexB type 1 subfamily.</text>
</comment>
<evidence type="ECO:0000255" key="1">
    <source>
        <dbReference type="HAMAP-Rule" id="MF_01452"/>
    </source>
</evidence>
<protein>
    <recommendedName>
        <fullName evidence="1">ATP-dependent helicase/deoxyribonuclease subunit B</fullName>
        <ecNumber evidence="1">3.1.-.-</ecNumber>
    </recommendedName>
    <alternativeName>
        <fullName evidence="1">ATP-dependent helicase/nuclease subunit AddB</fullName>
    </alternativeName>
</protein>
<reference key="1">
    <citation type="journal article" date="2003" name="Nature">
        <title>The genome sequence of Bacillus anthracis Ames and comparison to closely related bacteria.</title>
        <authorList>
            <person name="Read T.D."/>
            <person name="Peterson S.N."/>
            <person name="Tourasse N.J."/>
            <person name="Baillie L.W."/>
            <person name="Paulsen I.T."/>
            <person name="Nelson K.E."/>
            <person name="Tettelin H."/>
            <person name="Fouts D.E."/>
            <person name="Eisen J.A."/>
            <person name="Gill S.R."/>
            <person name="Holtzapple E.K."/>
            <person name="Okstad O.A."/>
            <person name="Helgason E."/>
            <person name="Rilstone J."/>
            <person name="Wu M."/>
            <person name="Kolonay J.F."/>
            <person name="Beanan M.J."/>
            <person name="Dodson R.J."/>
            <person name="Brinkac L.M."/>
            <person name="Gwinn M.L."/>
            <person name="DeBoy R.T."/>
            <person name="Madpu R."/>
            <person name="Daugherty S.C."/>
            <person name="Durkin A.S."/>
            <person name="Haft D.H."/>
            <person name="Nelson W.C."/>
            <person name="Peterson J.D."/>
            <person name="Pop M."/>
            <person name="Khouri H.M."/>
            <person name="Radune D."/>
            <person name="Benton J.L."/>
            <person name="Mahamoud Y."/>
            <person name="Jiang L."/>
            <person name="Hance I.R."/>
            <person name="Weidman J.F."/>
            <person name="Berry K.J."/>
            <person name="Plaut R.D."/>
            <person name="Wolf A.M."/>
            <person name="Watkins K.L."/>
            <person name="Nierman W.C."/>
            <person name="Hazen A."/>
            <person name="Cline R.T."/>
            <person name="Redmond C."/>
            <person name="Thwaite J.E."/>
            <person name="White O."/>
            <person name="Salzberg S.L."/>
            <person name="Thomason B."/>
            <person name="Friedlander A.M."/>
            <person name="Koehler T.M."/>
            <person name="Hanna P.C."/>
            <person name="Kolstoe A.-B."/>
            <person name="Fraser C.M."/>
        </authorList>
    </citation>
    <scope>NUCLEOTIDE SEQUENCE [LARGE SCALE GENOMIC DNA]</scope>
    <source>
        <strain>Ames / isolate Porton</strain>
    </source>
</reference>
<reference key="2">
    <citation type="submission" date="2004-01" db="EMBL/GenBank/DDBJ databases">
        <title>Complete genome sequence of Bacillus anthracis Sterne.</title>
        <authorList>
            <person name="Brettin T.S."/>
            <person name="Bruce D."/>
            <person name="Challacombe J.F."/>
            <person name="Gilna P."/>
            <person name="Han C."/>
            <person name="Hill K."/>
            <person name="Hitchcock P."/>
            <person name="Jackson P."/>
            <person name="Keim P."/>
            <person name="Longmire J."/>
            <person name="Lucas S."/>
            <person name="Okinaka R."/>
            <person name="Richardson P."/>
            <person name="Rubin E."/>
            <person name="Tice H."/>
        </authorList>
    </citation>
    <scope>NUCLEOTIDE SEQUENCE [LARGE SCALE GENOMIC DNA]</scope>
    <source>
        <strain>Sterne</strain>
    </source>
</reference>
<reference key="3">
    <citation type="journal article" date="2009" name="J. Bacteriol.">
        <title>The complete genome sequence of Bacillus anthracis Ames 'Ancestor'.</title>
        <authorList>
            <person name="Ravel J."/>
            <person name="Jiang L."/>
            <person name="Stanley S.T."/>
            <person name="Wilson M.R."/>
            <person name="Decker R.S."/>
            <person name="Read T.D."/>
            <person name="Worsham P."/>
            <person name="Keim P.S."/>
            <person name="Salzberg S.L."/>
            <person name="Fraser-Liggett C.M."/>
            <person name="Rasko D.A."/>
        </authorList>
    </citation>
    <scope>NUCLEOTIDE SEQUENCE [LARGE SCALE GENOMIC DNA]</scope>
    <source>
        <strain>Ames ancestor</strain>
    </source>
</reference>
<gene>
    <name evidence="1" type="primary">addB</name>
    <name type="ordered locus">BA_1141</name>
    <name type="ordered locus">GBAA_1141</name>
    <name type="ordered locus">BAS1060</name>
</gene>
<accession>Q81TW2</accession>
<accession>Q6I248</accession>
<accession>Q6KVY4</accession>
<feature type="chain" id="PRO_0000379152" description="ATP-dependent helicase/deoxyribonuclease subunit B">
    <location>
        <begin position="1"/>
        <end position="1171"/>
    </location>
</feature>
<feature type="domain" description="UvrD-like helicase ATP-binding" evidence="1">
    <location>
        <begin position="1"/>
        <end position="343"/>
    </location>
</feature>
<feature type="domain" description="UvrD-like helicase C-terminal" evidence="1">
    <location>
        <begin position="281"/>
        <end position="587"/>
    </location>
</feature>
<feature type="binding site" evidence="1">
    <location>
        <begin position="8"/>
        <end position="15"/>
    </location>
    <ligand>
        <name>ATP</name>
        <dbReference type="ChEBI" id="CHEBI:30616"/>
    </ligand>
</feature>
<feature type="binding site" evidence="1">
    <location>
        <position position="805"/>
    </location>
    <ligand>
        <name>[4Fe-4S] cluster</name>
        <dbReference type="ChEBI" id="CHEBI:49883"/>
    </ligand>
</feature>
<feature type="binding site" evidence="1">
    <location>
        <position position="1129"/>
    </location>
    <ligand>
        <name>[4Fe-4S] cluster</name>
        <dbReference type="ChEBI" id="CHEBI:49883"/>
    </ligand>
</feature>
<feature type="binding site" evidence="1">
    <location>
        <position position="1132"/>
    </location>
    <ligand>
        <name>[4Fe-4S] cluster</name>
        <dbReference type="ChEBI" id="CHEBI:49883"/>
    </ligand>
</feature>
<feature type="binding site" evidence="1">
    <location>
        <position position="1138"/>
    </location>
    <ligand>
        <name>[4Fe-4S] cluster</name>
        <dbReference type="ChEBI" id="CHEBI:49883"/>
    </ligand>
</feature>
<keyword id="KW-0004">4Fe-4S</keyword>
<keyword id="KW-0067">ATP-binding</keyword>
<keyword id="KW-0227">DNA damage</keyword>
<keyword id="KW-0234">DNA repair</keyword>
<keyword id="KW-0238">DNA-binding</keyword>
<keyword id="KW-0269">Exonuclease</keyword>
<keyword id="KW-0347">Helicase</keyword>
<keyword id="KW-0378">Hydrolase</keyword>
<keyword id="KW-0408">Iron</keyword>
<keyword id="KW-0411">Iron-sulfur</keyword>
<keyword id="KW-0479">Metal-binding</keyword>
<keyword id="KW-0540">Nuclease</keyword>
<keyword id="KW-0547">Nucleotide-binding</keyword>
<keyword id="KW-1185">Reference proteome</keyword>
<proteinExistence type="inferred from homology"/>
<name>ADDB_BACAN</name>
<organism>
    <name type="scientific">Bacillus anthracis</name>
    <dbReference type="NCBI Taxonomy" id="1392"/>
    <lineage>
        <taxon>Bacteria</taxon>
        <taxon>Bacillati</taxon>
        <taxon>Bacillota</taxon>
        <taxon>Bacilli</taxon>
        <taxon>Bacillales</taxon>
        <taxon>Bacillaceae</taxon>
        <taxon>Bacillus</taxon>
        <taxon>Bacillus cereus group</taxon>
    </lineage>
</organism>
<dbReference type="EC" id="3.1.-.-" evidence="1"/>
<dbReference type="EMBL" id="AE016879">
    <property type="protein sequence ID" value="AAP25111.1"/>
    <property type="molecule type" value="Genomic_DNA"/>
</dbReference>
<dbReference type="EMBL" id="AE017334">
    <property type="protein sequence ID" value="AAT30234.1"/>
    <property type="molecule type" value="Genomic_DNA"/>
</dbReference>
<dbReference type="EMBL" id="AE017225">
    <property type="protein sequence ID" value="AAT53383.1"/>
    <property type="molecule type" value="Genomic_DNA"/>
</dbReference>
<dbReference type="RefSeq" id="NP_843625.1">
    <property type="nucleotide sequence ID" value="NC_003997.3"/>
</dbReference>
<dbReference type="RefSeq" id="WP_000058556.1">
    <property type="nucleotide sequence ID" value="NZ_WXXJ01000044.1"/>
</dbReference>
<dbReference type="RefSeq" id="YP_027332.1">
    <property type="nucleotide sequence ID" value="NC_005945.1"/>
</dbReference>
<dbReference type="SMR" id="Q81TW2"/>
<dbReference type="IntAct" id="Q81TW2">
    <property type="interactions" value="1"/>
</dbReference>
<dbReference type="STRING" id="261594.GBAA_1141"/>
<dbReference type="DNASU" id="1089116"/>
<dbReference type="GeneID" id="45021156"/>
<dbReference type="KEGG" id="ban:BA_1141"/>
<dbReference type="KEGG" id="banh:HYU01_05925"/>
<dbReference type="KEGG" id="bar:GBAA_1141"/>
<dbReference type="KEGG" id="bat:BAS1060"/>
<dbReference type="PATRIC" id="fig|198094.11.peg.1122"/>
<dbReference type="eggNOG" id="COG3857">
    <property type="taxonomic scope" value="Bacteria"/>
</dbReference>
<dbReference type="HOGENOM" id="CLU_007838_0_0_9"/>
<dbReference type="OMA" id="IVPNHIK"/>
<dbReference type="OrthoDB" id="9758506at2"/>
<dbReference type="Proteomes" id="UP000000427">
    <property type="component" value="Chromosome"/>
</dbReference>
<dbReference type="Proteomes" id="UP000000594">
    <property type="component" value="Chromosome"/>
</dbReference>
<dbReference type="GO" id="GO:0051539">
    <property type="term" value="F:4 iron, 4 sulfur cluster binding"/>
    <property type="evidence" value="ECO:0007669"/>
    <property type="project" value="UniProtKB-KW"/>
</dbReference>
<dbReference type="GO" id="GO:0008409">
    <property type="term" value="F:5'-3' exonuclease activity"/>
    <property type="evidence" value="ECO:0007669"/>
    <property type="project" value="UniProtKB-UniRule"/>
</dbReference>
<dbReference type="GO" id="GO:0005524">
    <property type="term" value="F:ATP binding"/>
    <property type="evidence" value="ECO:0007669"/>
    <property type="project" value="UniProtKB-UniRule"/>
</dbReference>
<dbReference type="GO" id="GO:0003690">
    <property type="term" value="F:double-stranded DNA binding"/>
    <property type="evidence" value="ECO:0007669"/>
    <property type="project" value="UniProtKB-UniRule"/>
</dbReference>
<dbReference type="GO" id="GO:0004386">
    <property type="term" value="F:helicase activity"/>
    <property type="evidence" value="ECO:0007669"/>
    <property type="project" value="UniProtKB-KW"/>
</dbReference>
<dbReference type="GO" id="GO:0046872">
    <property type="term" value="F:metal ion binding"/>
    <property type="evidence" value="ECO:0007669"/>
    <property type="project" value="UniProtKB-KW"/>
</dbReference>
<dbReference type="GO" id="GO:0000724">
    <property type="term" value="P:double-strand break repair via homologous recombination"/>
    <property type="evidence" value="ECO:0007669"/>
    <property type="project" value="UniProtKB-UniRule"/>
</dbReference>
<dbReference type="FunFam" id="3.40.50.300:FF:001679">
    <property type="entry name" value="ATP-dependent helicase/deoxyribonuclease subunit B"/>
    <property type="match status" value="1"/>
</dbReference>
<dbReference type="FunFam" id="3.40.50.300:FF:001704">
    <property type="entry name" value="ATP-dependent helicase/deoxyribonuclease subunit B"/>
    <property type="match status" value="1"/>
</dbReference>
<dbReference type="FunFam" id="3.40.50.300:FF:001705">
    <property type="entry name" value="ATP-dependent helicase/deoxyribonuclease subunit B"/>
    <property type="match status" value="1"/>
</dbReference>
<dbReference type="FunFam" id="3.40.50.300:FF:001739">
    <property type="entry name" value="ATP-dependent helicase/deoxyribonuclease subunit B"/>
    <property type="match status" value="1"/>
</dbReference>
<dbReference type="FunFam" id="3.90.320.10:FF:000006">
    <property type="entry name" value="ATP-dependent helicase/deoxyribonuclease subunit B"/>
    <property type="match status" value="1"/>
</dbReference>
<dbReference type="Gene3D" id="3.90.320.10">
    <property type="match status" value="1"/>
</dbReference>
<dbReference type="Gene3D" id="6.10.140.1030">
    <property type="match status" value="1"/>
</dbReference>
<dbReference type="Gene3D" id="3.40.50.300">
    <property type="entry name" value="P-loop containing nucleotide triphosphate hydrolases"/>
    <property type="match status" value="4"/>
</dbReference>
<dbReference type="HAMAP" id="MF_01452">
    <property type="entry name" value="AddB_type1"/>
    <property type="match status" value="1"/>
</dbReference>
<dbReference type="InterPro" id="IPR049035">
    <property type="entry name" value="ADDB_N"/>
</dbReference>
<dbReference type="InterPro" id="IPR014140">
    <property type="entry name" value="DNA_helicase_suAddB"/>
</dbReference>
<dbReference type="InterPro" id="IPR014017">
    <property type="entry name" value="DNA_helicase_UvrD-like_C"/>
</dbReference>
<dbReference type="InterPro" id="IPR027417">
    <property type="entry name" value="P-loop_NTPase"/>
</dbReference>
<dbReference type="InterPro" id="IPR011604">
    <property type="entry name" value="PDDEXK-like_dom_sf"/>
</dbReference>
<dbReference type="InterPro" id="IPR038726">
    <property type="entry name" value="PDDEXK_AddAB-type"/>
</dbReference>
<dbReference type="NCBIfam" id="TIGR02773">
    <property type="entry name" value="addB_Gpos"/>
    <property type="match status" value="1"/>
</dbReference>
<dbReference type="PANTHER" id="PTHR30591">
    <property type="entry name" value="RECBCD ENZYME SUBUNIT RECC"/>
    <property type="match status" value="1"/>
</dbReference>
<dbReference type="PANTHER" id="PTHR30591:SF1">
    <property type="entry name" value="RECBCD ENZYME SUBUNIT RECC"/>
    <property type="match status" value="1"/>
</dbReference>
<dbReference type="Pfam" id="PF21445">
    <property type="entry name" value="ADDB_N"/>
    <property type="match status" value="1"/>
</dbReference>
<dbReference type="Pfam" id="PF12705">
    <property type="entry name" value="PDDEXK_1"/>
    <property type="match status" value="1"/>
</dbReference>
<dbReference type="Pfam" id="PF13361">
    <property type="entry name" value="UvrD_C"/>
    <property type="match status" value="1"/>
</dbReference>
<dbReference type="SUPFAM" id="SSF52540">
    <property type="entry name" value="P-loop containing nucleoside triphosphate hydrolases"/>
    <property type="match status" value="2"/>
</dbReference>
<dbReference type="PROSITE" id="PS51198">
    <property type="entry name" value="UVRD_HELICASE_ATP_BIND"/>
    <property type="match status" value="1"/>
</dbReference>
<dbReference type="PROSITE" id="PS51217">
    <property type="entry name" value="UVRD_HELICASE_CTER"/>
    <property type="match status" value="1"/>
</dbReference>
<sequence>MSLRFVIGRAGSGKSTLCLHEVQEELKQRPRGETILYLVPEQMTFQTQQALIGSEDVRGSIRAQVFSFSRLAWKVLQEVGGASRLHIDEAGVHMLLRKIVESRKDGLSVFQKAAEQNGFFEHLGSMIAEFKRYNVTPSNVYEMWQQLDAHSSSAEQKLLANKVYDLQLLYDDFERALIGKYLDSEDYLQLLVEKLPQSEYVKGAEVYIDGFHSFSPQELEIVRQLMICGARVTITLTIDEKTLAQPVNELDLFYETTLTYEKIKQVAREEKIEIEKTIPLMEQPRFHSPALAHLEMHYEARPNEKFHGEASVTIHTAANLRAEVEGVAREIRRLVAEENYRYRDIAVLLRNGESYYDVMRTLFTDYNIPHFIDEKRPMSHHPLVECIRSALEIISGNWRYDAVFRCVKTELLYPLDVRKETMREEMDEFENYCLAYGVQGKRWTSEDPWMYRRYRSLDDTNGMITDSEREMEEKINRLRDVVRTPVIRMQKRLKRAGTVMQMCEAVYLFLEELDVPKKLEALRIRAEENGDFLFATDHEQVWEEVMSLLDTFVEMLGEEKMSLSMFTDVMSTGLEALQFANIPPSLDQVLIANIDRSRLSNVKATFVIGVNEGVIPAAPMDEGMLSDEERDVLSAAGIELAPTTRQTLLEEQFVMYQMVTRATEKLYISCPLADEEGKTLLASSFIKKIKRMFPDVKDTFITNDVNDLSRLEQISYVATPEVTLSYVMQQLQTWKRYGFEGNLDFWWDVYNFYVTSDEWKQKSSRVLSSLFYRNRAQKLSTAVSRDLYGDKIKGSVSRMELFNRCAYAHFAQHGLSLRERDIFKLDAPDIGELFHAALKRIADRLLRENRTWADLSIKECEHLSAVVIEEIAPLLQRQILLSSNRHFYLKQKLQQIIFRTSIILREHAKSSGFVPVDLEVPFGMGGTGSLPPMEFSLPNGVKMEVVGRIDRVDKAEDENGTFLRIIDYKSSSKALDLTEVYYGLALQMLTYLDVVTSNAQTWMKKGGTASPAGVLYFHIHNPIVEVKGDASEAEIEKEILKKFKMKGLVLGDADVVRLMDNKLSTGSSDIISAGLKKDGSFSARSSIASEQEFNVLQKYVHHTFENIGKDITEGVIDIAPYKKGNKAACTFCNFKSVCQFDESLEDNQFRTLKDMKDSEAMEKIREEVGGE</sequence>